<protein>
    <recommendedName>
        <fullName evidence="1">NAD(P)H-quinone oxidoreductase subunit H, chloroplastic</fullName>
        <ecNumber evidence="1">7.1.1.-</ecNumber>
    </recommendedName>
    <alternativeName>
        <fullName>NAD(P)H dehydrogenase subunit H</fullName>
    </alternativeName>
    <alternativeName>
        <fullName evidence="1">NADH-plastoquinone oxidoreductase 49 kDa subunit</fullName>
    </alternativeName>
    <alternativeName>
        <fullName evidence="1">NADH-plastoquinone oxidoreductase subunit H</fullName>
    </alternativeName>
</protein>
<sequence>MTMLAAKADPMTLSMGPHHPSMHGVLRLIVTLDGENVTDCEPILGYLHRGMEKIAENRTIVQYLPYVTRWDYLATMFTEAITVNAPEKLTNIQVPKRASYIRIIMLELSRIASHLLWLGPFMADIGAQTPFFYILREREMIYDLFEAATGMRMMHNFFRIGGVAVDLPYGWVDKCLDFCDYFSLKVDEYERLITYNSIFLKRVEGVGTISREEAINWGLSGLMLRASGVQWDLRKVDHYECYDELDWQVQSQTEGDSLARYLVRIGEMRESVKIIQQALKVIPGGPYENLEARRLNQGKDSEWNDFEYQFISKKPSPTFKLPKQEHYIRVEAPKGELGIYLIGDDSVFPWRWKIRPPGFINLQILPQLVKGMKLADIMTILGSIDIIMGEVDR</sequence>
<organism>
    <name type="scientific">Anthoceros angustus</name>
    <name type="common">Hornwort</name>
    <name type="synonym">Anthoceros formosae</name>
    <dbReference type="NCBI Taxonomy" id="48387"/>
    <lineage>
        <taxon>Eukaryota</taxon>
        <taxon>Viridiplantae</taxon>
        <taxon>Streptophyta</taxon>
        <taxon>Embryophyta</taxon>
        <taxon>Anthocerotophyta</taxon>
        <taxon>Anthocerotopsida</taxon>
        <taxon>Anthocerotidae</taxon>
        <taxon>Anthocerotales</taxon>
        <taxon>Anthocerotaceae</taxon>
        <taxon>Anthoceros</taxon>
    </lineage>
</organism>
<proteinExistence type="evidence at transcript level"/>
<accession>Q85UU0</accession>
<accession>Q85WB4</accession>
<feature type="chain" id="PRO_0000118597" description="NAD(P)H-quinone oxidoreductase subunit H, chloroplastic">
    <location>
        <begin position="1"/>
        <end position="393"/>
    </location>
</feature>
<geneLocation type="chloroplast"/>
<comment type="function">
    <text evidence="1">NDH shuttles electrons from NAD(P)H:plastoquinone, via FMN and iron-sulfur (Fe-S) centers, to quinones in the photosynthetic chain and possibly in a chloroplast respiratory chain. The immediate electron acceptor for the enzyme in this species is believed to be plastoquinone. Couples the redox reaction to proton translocation, and thus conserves the redox energy in a proton gradient.</text>
</comment>
<comment type="catalytic activity">
    <reaction evidence="1">
        <text>a plastoquinone + NADH + (n+1) H(+)(in) = a plastoquinol + NAD(+) + n H(+)(out)</text>
        <dbReference type="Rhea" id="RHEA:42608"/>
        <dbReference type="Rhea" id="RHEA-COMP:9561"/>
        <dbReference type="Rhea" id="RHEA-COMP:9562"/>
        <dbReference type="ChEBI" id="CHEBI:15378"/>
        <dbReference type="ChEBI" id="CHEBI:17757"/>
        <dbReference type="ChEBI" id="CHEBI:57540"/>
        <dbReference type="ChEBI" id="CHEBI:57945"/>
        <dbReference type="ChEBI" id="CHEBI:62192"/>
    </reaction>
</comment>
<comment type="catalytic activity">
    <reaction evidence="1">
        <text>a plastoquinone + NADPH + (n+1) H(+)(in) = a plastoquinol + NADP(+) + n H(+)(out)</text>
        <dbReference type="Rhea" id="RHEA:42612"/>
        <dbReference type="Rhea" id="RHEA-COMP:9561"/>
        <dbReference type="Rhea" id="RHEA-COMP:9562"/>
        <dbReference type="ChEBI" id="CHEBI:15378"/>
        <dbReference type="ChEBI" id="CHEBI:17757"/>
        <dbReference type="ChEBI" id="CHEBI:57783"/>
        <dbReference type="ChEBI" id="CHEBI:58349"/>
        <dbReference type="ChEBI" id="CHEBI:62192"/>
    </reaction>
</comment>
<comment type="subunit">
    <text evidence="1">NDH is composed of at least 16 different subunits, 5 of which are encoded in the nucleus.</text>
</comment>
<comment type="subcellular location">
    <subcellularLocation>
        <location evidence="1">Plastid</location>
        <location evidence="1">Chloroplast thylakoid membrane</location>
        <topology evidence="1">Peripheral membrane protein</topology>
        <orientation evidence="1">Stromal side</orientation>
    </subcellularLocation>
</comment>
<comment type="RNA editing">
    <location>
        <position position="32" evidence="2 3"/>
    </location>
    <location>
        <position position="42" evidence="2 3"/>
    </location>
    <location>
        <position position="75" evidence="2 3"/>
    </location>
    <location>
        <position position="110" evidence="2 3"/>
    </location>
    <location>
        <position position="128" evidence="2 3"/>
    </location>
    <location>
        <position position="130" evidence="2 3"/>
    </location>
    <location>
        <position position="147" evidence="2 3"/>
    </location>
    <location>
        <position position="157" evidence="2 3"/>
    </location>
    <location>
        <position position="169" evidence="2 3"/>
    </location>
    <location>
        <position position="170" evidence="2 3"/>
    </location>
    <location>
        <position position="182" evidence="2 3"/>
    </location>
    <location>
        <position position="202" evidence="2 3"/>
    </location>
    <location>
        <position position="209" evidence="2 3"/>
    </location>
    <location>
        <position position="215" evidence="2 3"/>
    </location>
    <location>
        <position position="230" evidence="2 3"/>
    </location>
    <location>
        <position position="234" evidence="2 3"/>
    </location>
    <location>
        <position position="260" evidence="2 3"/>
    </location>
    <location>
        <position position="290" evidence="2 3"/>
    </location>
    <location>
        <position position="293" evidence="2 3"/>
    </location>
    <location>
        <position position="341" evidence="2 3"/>
    </location>
    <location>
        <position position="349" evidence="2 3"/>
    </location>
    <location>
        <position position="393" evidence="2 3"/>
    </location>
    <text>The nonsense codons at positions 128, 202, 230 and 293 are modified to sense codons.</text>
</comment>
<comment type="similarity">
    <text evidence="1">Belongs to the complex I 49 kDa subunit family.</text>
</comment>
<name>NDHH_ANTAG</name>
<evidence type="ECO:0000255" key="1">
    <source>
        <dbReference type="HAMAP-Rule" id="MF_01358"/>
    </source>
</evidence>
<evidence type="ECO:0000269" key="2">
    <source>
    </source>
</evidence>
<evidence type="ECO:0000269" key="3">
    <source>
    </source>
</evidence>
<gene>
    <name evidence="1" type="primary">ndhH</name>
</gene>
<dbReference type="EC" id="7.1.1.-" evidence="1"/>
<dbReference type="EMBL" id="AB087490">
    <property type="protein sequence ID" value="BAC55507.1"/>
    <property type="molecule type" value="mRNA"/>
</dbReference>
<dbReference type="EMBL" id="AB086179">
    <property type="protein sequence ID" value="BAC55407.2"/>
    <property type="status" value="ALT_SEQ"/>
    <property type="molecule type" value="Genomic_DNA"/>
</dbReference>
<dbReference type="RefSeq" id="NP_777470.1">
    <property type="nucleotide sequence ID" value="NC_004543.1"/>
</dbReference>
<dbReference type="SMR" id="Q85UU0"/>
<dbReference type="GeneID" id="2553501"/>
<dbReference type="GO" id="GO:0009535">
    <property type="term" value="C:chloroplast thylakoid membrane"/>
    <property type="evidence" value="ECO:0007669"/>
    <property type="project" value="UniProtKB-SubCell"/>
</dbReference>
<dbReference type="GO" id="GO:0051287">
    <property type="term" value="F:NAD binding"/>
    <property type="evidence" value="ECO:0007669"/>
    <property type="project" value="InterPro"/>
</dbReference>
<dbReference type="GO" id="GO:0016655">
    <property type="term" value="F:oxidoreductase activity, acting on NAD(P)H, quinone or similar compound as acceptor"/>
    <property type="evidence" value="ECO:0007669"/>
    <property type="project" value="UniProtKB-UniRule"/>
</dbReference>
<dbReference type="GO" id="GO:0048038">
    <property type="term" value="F:quinone binding"/>
    <property type="evidence" value="ECO:0007669"/>
    <property type="project" value="UniProtKB-KW"/>
</dbReference>
<dbReference type="GO" id="GO:0019684">
    <property type="term" value="P:photosynthesis, light reaction"/>
    <property type="evidence" value="ECO:0007669"/>
    <property type="project" value="UniProtKB-UniRule"/>
</dbReference>
<dbReference type="Gene3D" id="1.10.645.10">
    <property type="entry name" value="Cytochrome-c3 Hydrogenase, chain B"/>
    <property type="match status" value="1"/>
</dbReference>
<dbReference type="HAMAP" id="MF_01358">
    <property type="entry name" value="NDH1_NuoD"/>
    <property type="match status" value="1"/>
</dbReference>
<dbReference type="InterPro" id="IPR001135">
    <property type="entry name" value="NADH_Q_OxRdtase_suD"/>
</dbReference>
<dbReference type="InterPro" id="IPR014029">
    <property type="entry name" value="NADH_UbQ_OxRdtase_49kDa_CS"/>
</dbReference>
<dbReference type="InterPro" id="IPR022885">
    <property type="entry name" value="NDH1_su_D/H"/>
</dbReference>
<dbReference type="InterPro" id="IPR029014">
    <property type="entry name" value="NiFe-Hase_large"/>
</dbReference>
<dbReference type="NCBIfam" id="TIGR01962">
    <property type="entry name" value="NuoD"/>
    <property type="match status" value="1"/>
</dbReference>
<dbReference type="NCBIfam" id="NF004739">
    <property type="entry name" value="PRK06075.1"/>
    <property type="match status" value="1"/>
</dbReference>
<dbReference type="NCBIfam" id="NF005649">
    <property type="entry name" value="PRK07415.1"/>
    <property type="match status" value="1"/>
</dbReference>
<dbReference type="PANTHER" id="PTHR11993:SF10">
    <property type="entry name" value="NADH DEHYDROGENASE [UBIQUINONE] IRON-SULFUR PROTEIN 2, MITOCHONDRIAL"/>
    <property type="match status" value="1"/>
</dbReference>
<dbReference type="PANTHER" id="PTHR11993">
    <property type="entry name" value="NADH-UBIQUINONE OXIDOREDUCTASE 49 KDA SUBUNIT"/>
    <property type="match status" value="1"/>
</dbReference>
<dbReference type="Pfam" id="PF00346">
    <property type="entry name" value="Complex1_49kDa"/>
    <property type="match status" value="1"/>
</dbReference>
<dbReference type="SUPFAM" id="SSF56762">
    <property type="entry name" value="HydB/Nqo4-like"/>
    <property type="match status" value="1"/>
</dbReference>
<dbReference type="PROSITE" id="PS00535">
    <property type="entry name" value="COMPLEX1_49K"/>
    <property type="match status" value="1"/>
</dbReference>
<reference key="1">
    <citation type="journal article" date="2003" name="Nucleic Acids Res.">
        <title>The complete nucleotide sequence of the hornwort (Anthoceros formosae) chloroplast genome: insight into the earliest land plants.</title>
        <authorList>
            <person name="Kugita M."/>
            <person name="Kaneko A."/>
            <person name="Yamamoto Y."/>
            <person name="Takeya Y."/>
            <person name="Matsumoto T."/>
            <person name="Yoshinaga K."/>
        </authorList>
    </citation>
    <scope>NUCLEOTIDE SEQUENCE [LARGE SCALE GENOMIC DNA]</scope>
    <scope>RNA EDITING</scope>
</reference>
<reference key="2">
    <citation type="journal article" date="2003" name="Nucleic Acids Res.">
        <title>RNA editing in hornwort chloroplasts makes more than half the genes functional.</title>
        <authorList>
            <person name="Kugita M."/>
            <person name="Yamamoto Y."/>
            <person name="Fujikawa T."/>
            <person name="Matsumoto T."/>
            <person name="Yoshinaga K."/>
        </authorList>
    </citation>
    <scope>NUCLEOTIDE SEQUENCE [MRNA]</scope>
    <scope>RNA EDITING</scope>
    <source>
        <tissue>Thallus</tissue>
    </source>
</reference>
<keyword id="KW-0150">Chloroplast</keyword>
<keyword id="KW-0472">Membrane</keyword>
<keyword id="KW-0520">NAD</keyword>
<keyword id="KW-0521">NADP</keyword>
<keyword id="KW-0934">Plastid</keyword>
<keyword id="KW-0618">Plastoquinone</keyword>
<keyword id="KW-0874">Quinone</keyword>
<keyword id="KW-0691">RNA editing</keyword>
<keyword id="KW-0793">Thylakoid</keyword>
<keyword id="KW-1278">Translocase</keyword>
<keyword id="KW-0813">Transport</keyword>